<sequence>MDYKVKDLSLAEQGKKQIEWAEIHMPALMEIRKQFEKEKPLQGLRISAVLHVTKETAVLVKTLKIGGATVALAGSNPLSTQDDVAAALVEEGIRVFAWRGETEKDYYDNIKEILKYEPQIIMDDGGDLHAYVHENMPQLKLFGGTEETTTGVIRLKAMEEQGVLRYPVIAVNNAFTKYLFDNRIGTGQSTIDGILRATNILIAGKVAVVAGYGWVGRGIAQRLRGMGARVIVVEVSPLRALEAVMDGFDVMPMSKAAELGEIFITATGNINVIRKEHILKMKDGAILANSGHFNVEIDVKGLKEMAKSSRLIRPNLEEYELPNGKRIYLLAEGRLVNLAAAEGHPSEVMDLSFSNQALSVKYIYENRGKLENKVYNVPQEIDETVAKLKLNGMGIEIEPMTQEQIEYMKQWRYGT</sequence>
<organism>
    <name type="scientific">Sulfurisphaera tokodaii (strain DSM 16993 / JCM 10545 / NBRC 100140 / 7)</name>
    <name type="common">Sulfolobus tokodaii</name>
    <dbReference type="NCBI Taxonomy" id="273063"/>
    <lineage>
        <taxon>Archaea</taxon>
        <taxon>Thermoproteota</taxon>
        <taxon>Thermoprotei</taxon>
        <taxon>Sulfolobales</taxon>
        <taxon>Sulfolobaceae</taxon>
        <taxon>Sulfurisphaera</taxon>
    </lineage>
</organism>
<keyword id="KW-0963">Cytoplasm</keyword>
<keyword id="KW-0378">Hydrolase</keyword>
<keyword id="KW-0520">NAD</keyword>
<keyword id="KW-0554">One-carbon metabolism</keyword>
<keyword id="KW-1185">Reference proteome</keyword>
<protein>
    <recommendedName>
        <fullName evidence="1">Adenosylhomocysteinase</fullName>
        <ecNumber evidence="1">3.13.2.1</ecNumber>
    </recommendedName>
    <alternativeName>
        <fullName evidence="1">S-adenosyl-L-homocysteine hydrolase</fullName>
        <shortName evidence="1">AdoHcyase</shortName>
    </alternativeName>
</protein>
<evidence type="ECO:0000255" key="1">
    <source>
        <dbReference type="HAMAP-Rule" id="MF_00563"/>
    </source>
</evidence>
<accession>Q975T0</accession>
<accession>F9VMU6</accession>
<feature type="chain" id="PRO_0000117016" description="Adenosylhomocysteinase">
    <location>
        <begin position="1"/>
        <end position="415"/>
    </location>
</feature>
<feature type="binding site" evidence="1">
    <location>
        <position position="53"/>
    </location>
    <ligand>
        <name>substrate</name>
    </ligand>
</feature>
<feature type="binding site" evidence="1">
    <location>
        <position position="124"/>
    </location>
    <ligand>
        <name>substrate</name>
    </ligand>
</feature>
<feature type="binding site" evidence="1">
    <location>
        <position position="147"/>
    </location>
    <ligand>
        <name>substrate</name>
    </ligand>
</feature>
<feature type="binding site" evidence="1">
    <location>
        <begin position="148"/>
        <end position="150"/>
    </location>
    <ligand>
        <name>NAD(+)</name>
        <dbReference type="ChEBI" id="CHEBI:57540"/>
    </ligand>
</feature>
<feature type="binding site" evidence="1">
    <location>
        <position position="177"/>
    </location>
    <ligand>
        <name>substrate</name>
    </ligand>
</feature>
<feature type="binding site" evidence="1">
    <location>
        <position position="181"/>
    </location>
    <ligand>
        <name>substrate</name>
    </ligand>
</feature>
<feature type="binding site" evidence="1">
    <location>
        <position position="182"/>
    </location>
    <ligand>
        <name>NAD(+)</name>
        <dbReference type="ChEBI" id="CHEBI:57540"/>
    </ligand>
</feature>
<feature type="binding site" evidence="1">
    <location>
        <begin position="211"/>
        <end position="216"/>
    </location>
    <ligand>
        <name>NAD(+)</name>
        <dbReference type="ChEBI" id="CHEBI:57540"/>
    </ligand>
</feature>
<feature type="binding site" evidence="1">
    <location>
        <position position="234"/>
    </location>
    <ligand>
        <name>NAD(+)</name>
        <dbReference type="ChEBI" id="CHEBI:57540"/>
    </ligand>
</feature>
<feature type="binding site" evidence="1">
    <location>
        <position position="269"/>
    </location>
    <ligand>
        <name>NAD(+)</name>
        <dbReference type="ChEBI" id="CHEBI:57540"/>
    </ligand>
</feature>
<feature type="binding site" evidence="1">
    <location>
        <begin position="290"/>
        <end position="292"/>
    </location>
    <ligand>
        <name>NAD(+)</name>
        <dbReference type="ChEBI" id="CHEBI:57540"/>
    </ligand>
</feature>
<feature type="binding site" evidence="1">
    <location>
        <position position="337"/>
    </location>
    <ligand>
        <name>NAD(+)</name>
        <dbReference type="ChEBI" id="CHEBI:57540"/>
    </ligand>
</feature>
<proteinExistence type="inferred from homology"/>
<reference key="1">
    <citation type="journal article" date="2001" name="DNA Res.">
        <title>Complete genome sequence of an aerobic thermoacidophilic Crenarchaeon, Sulfolobus tokodaii strain7.</title>
        <authorList>
            <person name="Kawarabayasi Y."/>
            <person name="Hino Y."/>
            <person name="Horikawa H."/>
            <person name="Jin-no K."/>
            <person name="Takahashi M."/>
            <person name="Sekine M."/>
            <person name="Baba S."/>
            <person name="Ankai A."/>
            <person name="Kosugi H."/>
            <person name="Hosoyama A."/>
            <person name="Fukui S."/>
            <person name="Nagai Y."/>
            <person name="Nishijima K."/>
            <person name="Otsuka R."/>
            <person name="Nakazawa H."/>
            <person name="Takamiya M."/>
            <person name="Kato Y."/>
            <person name="Yoshizawa T."/>
            <person name="Tanaka T."/>
            <person name="Kudoh Y."/>
            <person name="Yamazaki J."/>
            <person name="Kushida N."/>
            <person name="Oguchi A."/>
            <person name="Aoki K."/>
            <person name="Masuda S."/>
            <person name="Yanagii M."/>
            <person name="Nishimura M."/>
            <person name="Yamagishi A."/>
            <person name="Oshima T."/>
            <person name="Kikuchi H."/>
        </authorList>
    </citation>
    <scope>NUCLEOTIDE SEQUENCE [LARGE SCALE GENOMIC DNA]</scope>
    <source>
        <strain>DSM 16993 / JCM 10545 / NBRC 100140 / 7</strain>
    </source>
</reference>
<comment type="function">
    <text evidence="1">May play a key role in the regulation of the intracellular concentration of adenosylhomocysteine.</text>
</comment>
<comment type="catalytic activity">
    <reaction evidence="1">
        <text>S-adenosyl-L-homocysteine + H2O = L-homocysteine + adenosine</text>
        <dbReference type="Rhea" id="RHEA:21708"/>
        <dbReference type="ChEBI" id="CHEBI:15377"/>
        <dbReference type="ChEBI" id="CHEBI:16335"/>
        <dbReference type="ChEBI" id="CHEBI:57856"/>
        <dbReference type="ChEBI" id="CHEBI:58199"/>
        <dbReference type="EC" id="3.13.2.1"/>
    </reaction>
</comment>
<comment type="cofactor">
    <cofactor evidence="1">
        <name>NAD(+)</name>
        <dbReference type="ChEBI" id="CHEBI:57540"/>
    </cofactor>
    <text evidence="1">Binds 1 NAD(+) per subunit.</text>
</comment>
<comment type="pathway">
    <text evidence="1">Amino-acid biosynthesis; L-homocysteine biosynthesis; L-homocysteine from S-adenosyl-L-homocysteine: step 1/1.</text>
</comment>
<comment type="subcellular location">
    <subcellularLocation>
        <location evidence="1">Cytoplasm</location>
    </subcellularLocation>
</comment>
<comment type="similarity">
    <text evidence="1">Belongs to the adenosylhomocysteinase family.</text>
</comment>
<gene>
    <name evidence="1" type="primary">ahcY</name>
    <name type="ordered locus">STK_03420</name>
</gene>
<dbReference type="EC" id="3.13.2.1" evidence="1"/>
<dbReference type="EMBL" id="BA000023">
    <property type="protein sequence ID" value="BAK54243.1"/>
    <property type="molecule type" value="Genomic_DNA"/>
</dbReference>
<dbReference type="RefSeq" id="WP_010978302.1">
    <property type="nucleotide sequence ID" value="NC_003106.2"/>
</dbReference>
<dbReference type="SMR" id="Q975T0"/>
<dbReference type="STRING" id="273063.STK_03420"/>
<dbReference type="GeneID" id="1458257"/>
<dbReference type="KEGG" id="sto:STK_03420"/>
<dbReference type="PATRIC" id="fig|273063.9.peg.399"/>
<dbReference type="eggNOG" id="arCOG04137">
    <property type="taxonomic scope" value="Archaea"/>
</dbReference>
<dbReference type="OrthoDB" id="8479at2157"/>
<dbReference type="UniPathway" id="UPA00314">
    <property type="reaction ID" value="UER00076"/>
</dbReference>
<dbReference type="Proteomes" id="UP000001015">
    <property type="component" value="Chromosome"/>
</dbReference>
<dbReference type="GO" id="GO:0005829">
    <property type="term" value="C:cytosol"/>
    <property type="evidence" value="ECO:0007669"/>
    <property type="project" value="TreeGrafter"/>
</dbReference>
<dbReference type="GO" id="GO:0004013">
    <property type="term" value="F:adenosylhomocysteinase activity"/>
    <property type="evidence" value="ECO:0007669"/>
    <property type="project" value="UniProtKB-UniRule"/>
</dbReference>
<dbReference type="GO" id="GO:0071269">
    <property type="term" value="P:L-homocysteine biosynthetic process"/>
    <property type="evidence" value="ECO:0007669"/>
    <property type="project" value="UniProtKB-UniRule"/>
</dbReference>
<dbReference type="GO" id="GO:0006730">
    <property type="term" value="P:one-carbon metabolic process"/>
    <property type="evidence" value="ECO:0007669"/>
    <property type="project" value="UniProtKB-KW"/>
</dbReference>
<dbReference type="GO" id="GO:0033353">
    <property type="term" value="P:S-adenosylmethionine cycle"/>
    <property type="evidence" value="ECO:0007669"/>
    <property type="project" value="TreeGrafter"/>
</dbReference>
<dbReference type="CDD" id="cd00401">
    <property type="entry name" value="SAHH"/>
    <property type="match status" value="1"/>
</dbReference>
<dbReference type="FunFam" id="3.40.50.720:FF:000004">
    <property type="entry name" value="Adenosylhomocysteinase"/>
    <property type="match status" value="1"/>
</dbReference>
<dbReference type="Gene3D" id="3.40.50.1480">
    <property type="entry name" value="Adenosylhomocysteinase-like"/>
    <property type="match status" value="1"/>
</dbReference>
<dbReference type="Gene3D" id="3.40.50.720">
    <property type="entry name" value="NAD(P)-binding Rossmann-like Domain"/>
    <property type="match status" value="1"/>
</dbReference>
<dbReference type="HAMAP" id="MF_00563">
    <property type="entry name" value="AdoHcyase"/>
    <property type="match status" value="1"/>
</dbReference>
<dbReference type="InterPro" id="IPR042172">
    <property type="entry name" value="Adenosylhomocyst_ase-like_sf"/>
</dbReference>
<dbReference type="InterPro" id="IPR000043">
    <property type="entry name" value="Adenosylhomocysteinase-like"/>
</dbReference>
<dbReference type="InterPro" id="IPR015878">
    <property type="entry name" value="Ado_hCys_hydrolase_NAD-bd"/>
</dbReference>
<dbReference type="InterPro" id="IPR036291">
    <property type="entry name" value="NAD(P)-bd_dom_sf"/>
</dbReference>
<dbReference type="InterPro" id="IPR020082">
    <property type="entry name" value="S-Ado-L-homoCys_hydrolase_CS"/>
</dbReference>
<dbReference type="NCBIfam" id="TIGR00936">
    <property type="entry name" value="ahcY"/>
    <property type="match status" value="1"/>
</dbReference>
<dbReference type="NCBIfam" id="NF004005">
    <property type="entry name" value="PRK05476.2-3"/>
    <property type="match status" value="1"/>
</dbReference>
<dbReference type="PANTHER" id="PTHR23420">
    <property type="entry name" value="ADENOSYLHOMOCYSTEINASE"/>
    <property type="match status" value="1"/>
</dbReference>
<dbReference type="PANTHER" id="PTHR23420:SF0">
    <property type="entry name" value="ADENOSYLHOMOCYSTEINASE"/>
    <property type="match status" value="1"/>
</dbReference>
<dbReference type="Pfam" id="PF05221">
    <property type="entry name" value="AdoHcyase"/>
    <property type="match status" value="2"/>
</dbReference>
<dbReference type="Pfam" id="PF00670">
    <property type="entry name" value="AdoHcyase_NAD"/>
    <property type="match status" value="1"/>
</dbReference>
<dbReference type="PIRSF" id="PIRSF001109">
    <property type="entry name" value="Ad_hcy_hydrolase"/>
    <property type="match status" value="1"/>
</dbReference>
<dbReference type="SMART" id="SM00996">
    <property type="entry name" value="AdoHcyase"/>
    <property type="match status" value="1"/>
</dbReference>
<dbReference type="SMART" id="SM00997">
    <property type="entry name" value="AdoHcyase_NAD"/>
    <property type="match status" value="1"/>
</dbReference>
<dbReference type="SUPFAM" id="SSF52283">
    <property type="entry name" value="Formate/glycerate dehydrogenase catalytic domain-like"/>
    <property type="match status" value="1"/>
</dbReference>
<dbReference type="SUPFAM" id="SSF51735">
    <property type="entry name" value="NAD(P)-binding Rossmann-fold domains"/>
    <property type="match status" value="1"/>
</dbReference>
<dbReference type="PROSITE" id="PS00738">
    <property type="entry name" value="ADOHCYASE_1"/>
    <property type="match status" value="1"/>
</dbReference>
<dbReference type="PROSITE" id="PS00739">
    <property type="entry name" value="ADOHCYASE_2"/>
    <property type="match status" value="1"/>
</dbReference>
<name>SAHH_SULTO</name>